<accession>P18779</accession>
<reference key="1">
    <citation type="journal article" date="1988" name="Gene">
        <title>The nucleotide sequence of a plasmid determinant for resistance to tellurium anions.</title>
        <authorList>
            <person name="Jobling M.G."/>
            <person name="Ritchie D.A."/>
        </authorList>
    </citation>
    <scope>NUCLEOTIDE SEQUENCE [GENOMIC DNA]</scope>
</reference>
<gene>
    <name type="primary">terB</name>
</gene>
<feature type="chain" id="PRO_0000072486" description="Tellurium resistance protein TerB">
    <location>
        <begin position="1"/>
        <end position="122"/>
    </location>
</feature>
<protein>
    <recommendedName>
        <fullName>Tellurium resistance protein TerB</fullName>
    </recommendedName>
</protein>
<comment type="function">
    <text>Not yet known.</text>
</comment>
<name>TERB_ALCSP</name>
<dbReference type="EMBL" id="M20238">
    <property type="protein sequence ID" value="AAA98290.1"/>
    <property type="molecule type" value="Genomic_DNA"/>
</dbReference>
<dbReference type="PIR" id="JT0362">
    <property type="entry name" value="B30754"/>
</dbReference>
<dbReference type="BMRB" id="P18779"/>
<dbReference type="SMR" id="P18779"/>
<dbReference type="GO" id="GO:0046690">
    <property type="term" value="P:response to tellurium ion"/>
    <property type="evidence" value="ECO:0007669"/>
    <property type="project" value="UniProtKB-KW"/>
</dbReference>
<dbReference type="CDD" id="cd07176">
    <property type="entry name" value="terB"/>
    <property type="match status" value="1"/>
</dbReference>
<dbReference type="Gene3D" id="1.10.3680.10">
    <property type="entry name" value="TerB-like"/>
    <property type="match status" value="1"/>
</dbReference>
<dbReference type="InterPro" id="IPR007791">
    <property type="entry name" value="DjlA_N"/>
</dbReference>
<dbReference type="InterPro" id="IPR029024">
    <property type="entry name" value="TerB-like"/>
</dbReference>
<dbReference type="Pfam" id="PF05099">
    <property type="entry name" value="TerB"/>
    <property type="match status" value="1"/>
</dbReference>
<dbReference type="SUPFAM" id="SSF158682">
    <property type="entry name" value="TerB-like"/>
    <property type="match status" value="1"/>
</dbReference>
<keyword id="KW-0614">Plasmid</keyword>
<keyword id="KW-0778">Tellurium resistance</keyword>
<geneLocation type="plasmid">
    <name>IncHI2 pMER610</name>
</geneLocation>
<organism>
    <name type="scientific">Alcaligenes sp</name>
    <dbReference type="NCBI Taxonomy" id="512"/>
    <lineage>
        <taxon>Bacteria</taxon>
        <taxon>Pseudomonadati</taxon>
        <taxon>Pseudomonadota</taxon>
        <taxon>Betaproteobacteria</taxon>
        <taxon>Burkholderiales</taxon>
        <taxon>Alcaligenaceae</taxon>
        <taxon>Alcaligenes</taxon>
    </lineage>
</organism>
<proteinExistence type="predicted"/>
<sequence>MRMSFFDKVKGALTSGREELTRQVGRYKNKKFMQGTVAVCARIAVASDGVSSEEKQKMIGFLRSSEELKVFDTAEVIEFFNKLVTSFDFDLEIGKGETMKYILALKDQPEAAQLALRVGICR</sequence>